<organism>
    <name type="scientific">Porphyromonas gingivalis (strain ATCC 33277 / DSM 20709 / CIP 103683 / JCM 12257 / NCTC 11834 / 2561)</name>
    <dbReference type="NCBI Taxonomy" id="431947"/>
    <lineage>
        <taxon>Bacteria</taxon>
        <taxon>Pseudomonadati</taxon>
        <taxon>Bacteroidota</taxon>
        <taxon>Bacteroidia</taxon>
        <taxon>Bacteroidales</taxon>
        <taxon>Porphyromonadaceae</taxon>
        <taxon>Porphyromonas</taxon>
    </lineage>
</organism>
<keyword id="KW-0687">Ribonucleoprotein</keyword>
<keyword id="KW-0689">Ribosomal protein</keyword>
<accession>B2RLC1</accession>
<proteinExistence type="inferred from homology"/>
<protein>
    <recommendedName>
        <fullName evidence="1">Large ribosomal subunit protein bL27</fullName>
    </recommendedName>
    <alternativeName>
        <fullName evidence="3">50S ribosomal protein L27</fullName>
    </alternativeName>
</protein>
<comment type="similarity">
    <text evidence="1">Belongs to the bacterial ribosomal protein bL27 family.</text>
</comment>
<feature type="chain" id="PRO_1000128789" description="Large ribosomal subunit protein bL27">
    <location>
        <begin position="1"/>
        <end position="85"/>
    </location>
</feature>
<feature type="region of interest" description="Disordered" evidence="2">
    <location>
        <begin position="1"/>
        <end position="21"/>
    </location>
</feature>
<sequence length="85" mass="9224">MAHKKGVGSSKNGRESESKRLGVKVYGGEMAKAGNILVRQRGTVHHPGENVGIGKDHTLYALKSGVVVFTRKKNDRSYVSIKTES</sequence>
<gene>
    <name evidence="1" type="primary">rpmA</name>
    <name type="ordered locus">PGN_1647</name>
</gene>
<name>RL27_PORG3</name>
<dbReference type="EMBL" id="AP009380">
    <property type="protein sequence ID" value="BAG34166.1"/>
    <property type="molecule type" value="Genomic_DNA"/>
</dbReference>
<dbReference type="RefSeq" id="WP_004584800.1">
    <property type="nucleotide sequence ID" value="NZ_CP025930.1"/>
</dbReference>
<dbReference type="SMR" id="B2RLC1"/>
<dbReference type="GeneID" id="29256816"/>
<dbReference type="KEGG" id="pgn:PGN_1647"/>
<dbReference type="eggNOG" id="COG0211">
    <property type="taxonomic scope" value="Bacteria"/>
</dbReference>
<dbReference type="HOGENOM" id="CLU_095424_4_1_10"/>
<dbReference type="OrthoDB" id="9803474at2"/>
<dbReference type="BioCyc" id="PGIN431947:G1G2V-1853-MONOMER"/>
<dbReference type="Proteomes" id="UP000008842">
    <property type="component" value="Chromosome"/>
</dbReference>
<dbReference type="GO" id="GO:0022625">
    <property type="term" value="C:cytosolic large ribosomal subunit"/>
    <property type="evidence" value="ECO:0007669"/>
    <property type="project" value="TreeGrafter"/>
</dbReference>
<dbReference type="GO" id="GO:0003735">
    <property type="term" value="F:structural constituent of ribosome"/>
    <property type="evidence" value="ECO:0007669"/>
    <property type="project" value="InterPro"/>
</dbReference>
<dbReference type="GO" id="GO:0006412">
    <property type="term" value="P:translation"/>
    <property type="evidence" value="ECO:0007669"/>
    <property type="project" value="UniProtKB-UniRule"/>
</dbReference>
<dbReference type="FunFam" id="2.40.50.100:FF:000060">
    <property type="entry name" value="Apicoplast ribosomal protein L27"/>
    <property type="match status" value="1"/>
</dbReference>
<dbReference type="Gene3D" id="2.40.50.100">
    <property type="match status" value="1"/>
</dbReference>
<dbReference type="HAMAP" id="MF_00539">
    <property type="entry name" value="Ribosomal_bL27"/>
    <property type="match status" value="1"/>
</dbReference>
<dbReference type="InterPro" id="IPR001684">
    <property type="entry name" value="Ribosomal_bL27"/>
</dbReference>
<dbReference type="InterPro" id="IPR018261">
    <property type="entry name" value="Ribosomal_bL27_CS"/>
</dbReference>
<dbReference type="NCBIfam" id="TIGR00062">
    <property type="entry name" value="L27"/>
    <property type="match status" value="1"/>
</dbReference>
<dbReference type="PANTHER" id="PTHR15893:SF0">
    <property type="entry name" value="LARGE RIBOSOMAL SUBUNIT PROTEIN BL27M"/>
    <property type="match status" value="1"/>
</dbReference>
<dbReference type="PANTHER" id="PTHR15893">
    <property type="entry name" value="RIBOSOMAL PROTEIN L27"/>
    <property type="match status" value="1"/>
</dbReference>
<dbReference type="Pfam" id="PF01016">
    <property type="entry name" value="Ribosomal_L27"/>
    <property type="match status" value="1"/>
</dbReference>
<dbReference type="PRINTS" id="PR00063">
    <property type="entry name" value="RIBOSOMALL27"/>
</dbReference>
<dbReference type="SUPFAM" id="SSF110324">
    <property type="entry name" value="Ribosomal L27 protein-like"/>
    <property type="match status" value="1"/>
</dbReference>
<dbReference type="PROSITE" id="PS00831">
    <property type="entry name" value="RIBOSOMAL_L27"/>
    <property type="match status" value="1"/>
</dbReference>
<reference key="1">
    <citation type="journal article" date="2008" name="DNA Res.">
        <title>Determination of the genome sequence of Porphyromonas gingivalis strain ATCC 33277 and genomic comparison with strain W83 revealed extensive genome rearrangements in P. gingivalis.</title>
        <authorList>
            <person name="Naito M."/>
            <person name="Hirakawa H."/>
            <person name="Yamashita A."/>
            <person name="Ohara N."/>
            <person name="Shoji M."/>
            <person name="Yukitake H."/>
            <person name="Nakayama K."/>
            <person name="Toh H."/>
            <person name="Yoshimura F."/>
            <person name="Kuhara S."/>
            <person name="Hattori M."/>
            <person name="Hayashi T."/>
            <person name="Nakayama K."/>
        </authorList>
    </citation>
    <scope>NUCLEOTIDE SEQUENCE [LARGE SCALE GENOMIC DNA]</scope>
    <source>
        <strain>ATCC 33277 / DSM 20709 / CIP 103683 / JCM 12257 / NCTC 11834 / 2561</strain>
    </source>
</reference>
<evidence type="ECO:0000255" key="1">
    <source>
        <dbReference type="HAMAP-Rule" id="MF_00539"/>
    </source>
</evidence>
<evidence type="ECO:0000256" key="2">
    <source>
        <dbReference type="SAM" id="MobiDB-lite"/>
    </source>
</evidence>
<evidence type="ECO:0000305" key="3"/>